<organism>
    <name type="scientific">Xylella fastidiosa (strain Temecula1 / ATCC 700964)</name>
    <dbReference type="NCBI Taxonomy" id="183190"/>
    <lineage>
        <taxon>Bacteria</taxon>
        <taxon>Pseudomonadati</taxon>
        <taxon>Pseudomonadota</taxon>
        <taxon>Gammaproteobacteria</taxon>
        <taxon>Lysobacterales</taxon>
        <taxon>Lysobacteraceae</taxon>
        <taxon>Xylella</taxon>
    </lineage>
</organism>
<sequence length="80" mass="8840">MLIAWPDRVHCCEIMLQEGARVVDAVEMAALNGIEQAVGYAVFGVLVTSDHVLNDGDRVELLRPLLIDPKEARRRRAVSA</sequence>
<gene>
    <name type="ordered locus">PD_1376</name>
</gene>
<evidence type="ECO:0000305" key="1"/>
<feature type="chain" id="PRO_0000192507" description="UPF0125 protein PD_1376">
    <location>
        <begin position="1"/>
        <end position="80"/>
    </location>
</feature>
<comment type="similarity">
    <text evidence="1">Belongs to the UPF0125 (RnfH) family.</text>
</comment>
<accession>Q87BS2</accession>
<dbReference type="EMBL" id="AE009442">
    <property type="protein sequence ID" value="AAO29223.1"/>
    <property type="molecule type" value="Genomic_DNA"/>
</dbReference>
<dbReference type="SMR" id="Q87BS2"/>
<dbReference type="KEGG" id="xft:PD_1376"/>
<dbReference type="HOGENOM" id="CLU_150721_0_1_6"/>
<dbReference type="Proteomes" id="UP000002516">
    <property type="component" value="Chromosome"/>
</dbReference>
<dbReference type="Gene3D" id="3.10.20.280">
    <property type="entry name" value="RnfH-like"/>
    <property type="match status" value="1"/>
</dbReference>
<dbReference type="HAMAP" id="MF_00460">
    <property type="entry name" value="UPF0125_RnfH"/>
    <property type="match status" value="1"/>
</dbReference>
<dbReference type="InterPro" id="IPR016155">
    <property type="entry name" value="Mopterin_synth/thiamin_S_b"/>
</dbReference>
<dbReference type="InterPro" id="IPR005346">
    <property type="entry name" value="RnfH"/>
</dbReference>
<dbReference type="InterPro" id="IPR037021">
    <property type="entry name" value="RnfH_sf"/>
</dbReference>
<dbReference type="NCBIfam" id="NF002490">
    <property type="entry name" value="PRK01777.1"/>
    <property type="match status" value="1"/>
</dbReference>
<dbReference type="PANTHER" id="PTHR37483">
    <property type="entry name" value="UPF0125 PROTEIN RATB"/>
    <property type="match status" value="1"/>
</dbReference>
<dbReference type="PANTHER" id="PTHR37483:SF1">
    <property type="entry name" value="UPF0125 PROTEIN RATB"/>
    <property type="match status" value="1"/>
</dbReference>
<dbReference type="Pfam" id="PF03658">
    <property type="entry name" value="Ub-RnfH"/>
    <property type="match status" value="1"/>
</dbReference>
<dbReference type="SUPFAM" id="SSF54285">
    <property type="entry name" value="MoaD/ThiS"/>
    <property type="match status" value="1"/>
</dbReference>
<protein>
    <recommendedName>
        <fullName>UPF0125 protein PD_1376</fullName>
    </recommendedName>
</protein>
<name>Y1376_XYLFT</name>
<keyword id="KW-1185">Reference proteome</keyword>
<reference key="1">
    <citation type="journal article" date="2003" name="J. Bacteriol.">
        <title>Comparative analyses of the complete genome sequences of Pierce's disease and citrus variegated chlorosis strains of Xylella fastidiosa.</title>
        <authorList>
            <person name="Van Sluys M.A."/>
            <person name="de Oliveira M.C."/>
            <person name="Monteiro-Vitorello C.B."/>
            <person name="Miyaki C.Y."/>
            <person name="Furlan L.R."/>
            <person name="Camargo L.E.A."/>
            <person name="da Silva A.C.R."/>
            <person name="Moon D.H."/>
            <person name="Takita M.A."/>
            <person name="Lemos E.G.M."/>
            <person name="Machado M.A."/>
            <person name="Ferro M.I.T."/>
            <person name="da Silva F.R."/>
            <person name="Goldman M.H.S."/>
            <person name="Goldman G.H."/>
            <person name="Lemos M.V.F."/>
            <person name="El-Dorry H."/>
            <person name="Tsai S.M."/>
            <person name="Carrer H."/>
            <person name="Carraro D.M."/>
            <person name="de Oliveira R.C."/>
            <person name="Nunes L.R."/>
            <person name="Siqueira W.J."/>
            <person name="Coutinho L.L."/>
            <person name="Kimura E.T."/>
            <person name="Ferro E.S."/>
            <person name="Harakava R."/>
            <person name="Kuramae E.E."/>
            <person name="Marino C.L."/>
            <person name="Giglioti E."/>
            <person name="Abreu I.L."/>
            <person name="Alves L.M.C."/>
            <person name="do Amaral A.M."/>
            <person name="Baia G.S."/>
            <person name="Blanco S.R."/>
            <person name="Brito M.S."/>
            <person name="Cannavan F.S."/>
            <person name="Celestino A.V."/>
            <person name="da Cunha A.F."/>
            <person name="Fenille R.C."/>
            <person name="Ferro J.A."/>
            <person name="Formighieri E.F."/>
            <person name="Kishi L.T."/>
            <person name="Leoni S.G."/>
            <person name="Oliveira A.R."/>
            <person name="Rosa V.E. Jr."/>
            <person name="Sassaki F.T."/>
            <person name="Sena J.A.D."/>
            <person name="de Souza A.A."/>
            <person name="Truffi D."/>
            <person name="Tsukumo F."/>
            <person name="Yanai G.M."/>
            <person name="Zaros L.G."/>
            <person name="Civerolo E.L."/>
            <person name="Simpson A.J.G."/>
            <person name="Almeida N.F. Jr."/>
            <person name="Setubal J.C."/>
            <person name="Kitajima J.P."/>
        </authorList>
    </citation>
    <scope>NUCLEOTIDE SEQUENCE [LARGE SCALE GENOMIC DNA]</scope>
    <source>
        <strain>Temecula1 / ATCC 700964</strain>
    </source>
</reference>
<proteinExistence type="inferred from homology"/>